<accession>B1IK79</accession>
<evidence type="ECO:0000255" key="1">
    <source>
        <dbReference type="HAMAP-Rule" id="MF_00068"/>
    </source>
</evidence>
<protein>
    <recommendedName>
        <fullName evidence="1">N-acetylmuramic acid 6-phosphate etherase</fullName>
        <shortName evidence="1">MurNAc-6-P etherase</shortName>
        <ecNumber evidence="1">4.2.1.126</ecNumber>
    </recommendedName>
    <alternativeName>
        <fullName evidence="1">N-acetylmuramic acid 6-phosphate hydrolase</fullName>
    </alternativeName>
    <alternativeName>
        <fullName evidence="1">N-acetylmuramic acid 6-phosphate lyase</fullName>
    </alternativeName>
</protein>
<gene>
    <name evidence="1" type="primary">murQ</name>
    <name type="ordered locus">CLD_3192</name>
</gene>
<sequence>MTNISLDKLVTESRNENTKDIDRVETLEMLKMINDEDKKVAEAVEKELINIAKAVDKIGESFLNGGRLIYVGAGTSGRLGVLDASECPPTYGVSYDLVRGIIAGGESAMFKAREGAEDSKKLCIKDLKNVNFGENDILVGIAASGRTPYVIGGLEYANGIGATTISVTCNPESEMSKIANISIAPVVGPEAITGSTRMKAGTAQKMVLNMLSTGAMVKTGKVYGNLMVDLKATNEKLVERAKRIVMQATGSKREQVEKILKETNFDVKLSIFMIESSLDKIKAKEILDKNKGYIVEAIKEIS</sequence>
<reference key="1">
    <citation type="journal article" date="2007" name="PLoS ONE">
        <title>Analysis of the neurotoxin complex genes in Clostridium botulinum A1-A4 and B1 strains: BoNT/A3, /Ba4 and /B1 clusters are located within plasmids.</title>
        <authorList>
            <person name="Smith T.J."/>
            <person name="Hill K.K."/>
            <person name="Foley B.T."/>
            <person name="Detter J.C."/>
            <person name="Munk A.C."/>
            <person name="Bruce D.C."/>
            <person name="Doggett N.A."/>
            <person name="Smith L.A."/>
            <person name="Marks J.D."/>
            <person name="Xie G."/>
            <person name="Brettin T.S."/>
        </authorList>
    </citation>
    <scope>NUCLEOTIDE SEQUENCE [LARGE SCALE GENOMIC DNA]</scope>
    <source>
        <strain>Okra / Type B1</strain>
    </source>
</reference>
<organism>
    <name type="scientific">Clostridium botulinum (strain Okra / Type B1)</name>
    <dbReference type="NCBI Taxonomy" id="498213"/>
    <lineage>
        <taxon>Bacteria</taxon>
        <taxon>Bacillati</taxon>
        <taxon>Bacillota</taxon>
        <taxon>Clostridia</taxon>
        <taxon>Eubacteriales</taxon>
        <taxon>Clostridiaceae</taxon>
        <taxon>Clostridium</taxon>
    </lineage>
</organism>
<dbReference type="EC" id="4.2.1.126" evidence="1"/>
<dbReference type="EMBL" id="CP000939">
    <property type="protein sequence ID" value="ACA44691.1"/>
    <property type="molecule type" value="Genomic_DNA"/>
</dbReference>
<dbReference type="RefSeq" id="WP_003401253.1">
    <property type="nucleotide sequence ID" value="NC_010516.1"/>
</dbReference>
<dbReference type="SMR" id="B1IK79"/>
<dbReference type="KEGG" id="cbb:CLD_3192"/>
<dbReference type="HOGENOM" id="CLU_049049_1_1_9"/>
<dbReference type="UniPathway" id="UPA00342"/>
<dbReference type="Proteomes" id="UP000008541">
    <property type="component" value="Chromosome"/>
</dbReference>
<dbReference type="GO" id="GO:0097367">
    <property type="term" value="F:carbohydrate derivative binding"/>
    <property type="evidence" value="ECO:0007669"/>
    <property type="project" value="InterPro"/>
</dbReference>
<dbReference type="GO" id="GO:0016835">
    <property type="term" value="F:carbon-oxygen lyase activity"/>
    <property type="evidence" value="ECO:0007669"/>
    <property type="project" value="UniProtKB-UniRule"/>
</dbReference>
<dbReference type="GO" id="GO:0016803">
    <property type="term" value="F:ether hydrolase activity"/>
    <property type="evidence" value="ECO:0007669"/>
    <property type="project" value="TreeGrafter"/>
</dbReference>
<dbReference type="GO" id="GO:0046348">
    <property type="term" value="P:amino sugar catabolic process"/>
    <property type="evidence" value="ECO:0007669"/>
    <property type="project" value="InterPro"/>
</dbReference>
<dbReference type="GO" id="GO:0097173">
    <property type="term" value="P:N-acetylmuramic acid catabolic process"/>
    <property type="evidence" value="ECO:0007669"/>
    <property type="project" value="UniProtKB-UniPathway"/>
</dbReference>
<dbReference type="GO" id="GO:0009254">
    <property type="term" value="P:peptidoglycan turnover"/>
    <property type="evidence" value="ECO:0007669"/>
    <property type="project" value="TreeGrafter"/>
</dbReference>
<dbReference type="CDD" id="cd05007">
    <property type="entry name" value="SIS_Etherase"/>
    <property type="match status" value="1"/>
</dbReference>
<dbReference type="FunFam" id="1.10.8.1080:FF:000001">
    <property type="entry name" value="N-acetylmuramic acid 6-phosphate etherase"/>
    <property type="match status" value="1"/>
</dbReference>
<dbReference type="FunFam" id="3.40.50.10490:FF:000014">
    <property type="entry name" value="N-acetylmuramic acid 6-phosphate etherase"/>
    <property type="match status" value="1"/>
</dbReference>
<dbReference type="Gene3D" id="1.10.8.1080">
    <property type="match status" value="1"/>
</dbReference>
<dbReference type="Gene3D" id="3.40.50.10490">
    <property type="entry name" value="Glucose-6-phosphate isomerase like protein, domain 1"/>
    <property type="match status" value="1"/>
</dbReference>
<dbReference type="HAMAP" id="MF_00068">
    <property type="entry name" value="MurQ"/>
    <property type="match status" value="1"/>
</dbReference>
<dbReference type="InterPro" id="IPR005488">
    <property type="entry name" value="Etherase_MurQ"/>
</dbReference>
<dbReference type="InterPro" id="IPR005486">
    <property type="entry name" value="Glucokinase_regulatory_CS"/>
</dbReference>
<dbReference type="InterPro" id="IPR040190">
    <property type="entry name" value="MURQ/GCKR"/>
</dbReference>
<dbReference type="InterPro" id="IPR001347">
    <property type="entry name" value="SIS_dom"/>
</dbReference>
<dbReference type="InterPro" id="IPR046348">
    <property type="entry name" value="SIS_dom_sf"/>
</dbReference>
<dbReference type="NCBIfam" id="TIGR00274">
    <property type="entry name" value="N-acetylmuramic acid 6-phosphate etherase"/>
    <property type="match status" value="1"/>
</dbReference>
<dbReference type="NCBIfam" id="NF003915">
    <property type="entry name" value="PRK05441.1"/>
    <property type="match status" value="1"/>
</dbReference>
<dbReference type="NCBIfam" id="NF009222">
    <property type="entry name" value="PRK12570.1"/>
    <property type="match status" value="1"/>
</dbReference>
<dbReference type="PANTHER" id="PTHR10088">
    <property type="entry name" value="GLUCOKINASE REGULATORY PROTEIN"/>
    <property type="match status" value="1"/>
</dbReference>
<dbReference type="PANTHER" id="PTHR10088:SF4">
    <property type="entry name" value="GLUCOKINASE REGULATORY PROTEIN"/>
    <property type="match status" value="1"/>
</dbReference>
<dbReference type="Pfam" id="PF22645">
    <property type="entry name" value="GKRP_SIS_N"/>
    <property type="match status" value="1"/>
</dbReference>
<dbReference type="SUPFAM" id="SSF53697">
    <property type="entry name" value="SIS domain"/>
    <property type="match status" value="1"/>
</dbReference>
<dbReference type="PROSITE" id="PS01272">
    <property type="entry name" value="GCKR"/>
    <property type="match status" value="1"/>
</dbReference>
<dbReference type="PROSITE" id="PS51464">
    <property type="entry name" value="SIS"/>
    <property type="match status" value="1"/>
</dbReference>
<keyword id="KW-0119">Carbohydrate metabolism</keyword>
<keyword id="KW-0456">Lyase</keyword>
<name>MURQ_CLOBK</name>
<comment type="function">
    <text evidence="1">Specifically catalyzes the cleavage of the D-lactyl ether substituent of MurNAc 6-phosphate, producing GlcNAc 6-phosphate and D-lactate.</text>
</comment>
<comment type="catalytic activity">
    <reaction evidence="1">
        <text>N-acetyl-D-muramate 6-phosphate + H2O = N-acetyl-D-glucosamine 6-phosphate + (R)-lactate</text>
        <dbReference type="Rhea" id="RHEA:26410"/>
        <dbReference type="ChEBI" id="CHEBI:15377"/>
        <dbReference type="ChEBI" id="CHEBI:16004"/>
        <dbReference type="ChEBI" id="CHEBI:57513"/>
        <dbReference type="ChEBI" id="CHEBI:58722"/>
        <dbReference type="EC" id="4.2.1.126"/>
    </reaction>
</comment>
<comment type="pathway">
    <text evidence="1">Amino-sugar metabolism; N-acetylmuramate degradation.</text>
</comment>
<comment type="subunit">
    <text evidence="1">Homodimer.</text>
</comment>
<comment type="miscellaneous">
    <text evidence="1">A lyase-type mechanism (elimination/hydration) is suggested for the cleavage of the lactyl ether bond of MurNAc 6-phosphate, with the formation of an alpha,beta-unsaturated aldehyde intermediate with (E)-stereochemistry, followed by the syn addition of water to give product.</text>
</comment>
<comment type="similarity">
    <text evidence="1">Belongs to the GCKR-like family. MurNAc-6-P etherase subfamily.</text>
</comment>
<proteinExistence type="inferred from homology"/>
<feature type="chain" id="PRO_1000092302" description="N-acetylmuramic acid 6-phosphate etherase">
    <location>
        <begin position="1"/>
        <end position="302"/>
    </location>
</feature>
<feature type="domain" description="SIS" evidence="1">
    <location>
        <begin position="58"/>
        <end position="221"/>
    </location>
</feature>
<feature type="active site" description="Proton donor" evidence="1">
    <location>
        <position position="86"/>
    </location>
</feature>
<feature type="active site" evidence="1">
    <location>
        <position position="117"/>
    </location>
</feature>